<dbReference type="EMBL" id="AY236510">
    <property type="protein sequence ID" value="AAP43956.1"/>
    <property type="molecule type" value="mRNA"/>
</dbReference>
<dbReference type="SMR" id="Q7YRK0"/>
<dbReference type="UniPathway" id="UPA00705"/>
<dbReference type="GO" id="GO:0005743">
    <property type="term" value="C:mitochondrial inner membrane"/>
    <property type="evidence" value="ECO:0007669"/>
    <property type="project" value="UniProtKB-SubCell"/>
</dbReference>
<dbReference type="GO" id="GO:0006119">
    <property type="term" value="P:oxidative phosphorylation"/>
    <property type="evidence" value="ECO:0007669"/>
    <property type="project" value="UniProtKB-UniPathway"/>
</dbReference>
<dbReference type="CDD" id="cd22901">
    <property type="entry name" value="CcO_VIc"/>
    <property type="match status" value="1"/>
</dbReference>
<dbReference type="FunFam" id="4.10.93.10:FF:000001">
    <property type="entry name" value="Cytochrome c oxidase subunit 6C"/>
    <property type="match status" value="1"/>
</dbReference>
<dbReference type="Gene3D" id="4.10.93.10">
    <property type="entry name" value="Mitochondrial cytochrome c oxidase subunit VIc/VIIs"/>
    <property type="match status" value="1"/>
</dbReference>
<dbReference type="InterPro" id="IPR051389">
    <property type="entry name" value="Cytochrome_c_oxidase_VIc"/>
</dbReference>
<dbReference type="InterPro" id="IPR034884">
    <property type="entry name" value="Cytochrome_c_oxidase_VIc/VIIs"/>
</dbReference>
<dbReference type="InterPro" id="IPR037169">
    <property type="entry name" value="Cytochrome_c_oxidase_VIc_sf"/>
</dbReference>
<dbReference type="PANTHER" id="PTHR48416">
    <property type="entry name" value="CYTOCHROME C OXIDASE SUBUNIT 6C"/>
    <property type="match status" value="1"/>
</dbReference>
<dbReference type="PANTHER" id="PTHR48416:SF1">
    <property type="entry name" value="CYTOCHROME C OXIDASE SUBUNIT 6C"/>
    <property type="match status" value="1"/>
</dbReference>
<dbReference type="Pfam" id="PF02937">
    <property type="entry name" value="COX6C"/>
    <property type="match status" value="1"/>
</dbReference>
<dbReference type="SUPFAM" id="SSF81415">
    <property type="entry name" value="Mitochondrial cytochrome c oxidase subunit VIc"/>
    <property type="match status" value="1"/>
</dbReference>
<gene>
    <name type="primary">COX6C</name>
</gene>
<comment type="function">
    <text evidence="1">Component of the cytochrome c oxidase, the last enzyme in the mitochondrial electron transport chain which drives oxidative phosphorylation. The respiratory chain contains 3 multisubunit complexes succinate dehydrogenase (complex II, CII), ubiquinol-cytochrome c oxidoreductase (cytochrome b-c1 complex, complex III, CIII) and cytochrome c oxidase (complex IV, CIV), that cooperate to transfer electrons derived from NADH and succinate to molecular oxygen, creating an electrochemical gradient over the inner membrane that drives transmembrane transport and the ATP synthase. Cytochrome c oxidase is the component of the respiratory chain that catalyzes the reduction of oxygen to water. Electrons originating from reduced cytochrome c in the intermembrane space (IMS) are transferred via the dinuclear copper A center (CU(A)) of subunit 2 and heme A of subunit 1 to the active site in subunit 1, a binuclear center (BNC) formed by heme A3 and copper B (CU(B)). The BNC reduces molecular oxygen to 2 water molecules using 4 electrons from cytochrome c in the IMS and 4 protons from the mitochondrial matrix.</text>
</comment>
<comment type="pathway">
    <text evidence="1">Energy metabolism; oxidative phosphorylation.</text>
</comment>
<comment type="subunit">
    <text evidence="1">Component of the cytochrome c oxidase (complex IV, CIV), a multisubunit enzyme composed of 14 subunits. The complex is composed of a catalytic core of 3 subunits MT-CO1, MT-CO2 and MT-CO3, encoded in the mitochondrial DNA, and 11 supernumerary subunits COX4I, COX5A, COX5B, COX6A, COX6B, COX6C, COX7A, COX7B, COX7C, COX8 and NDUFA4, which are encoded in the nuclear genome. The complex exists as a monomer or a dimer and forms supercomplexes (SCs) in the inner mitochondrial membrane with NADH-ubiquinone oxidoreductase (complex I, CI) and ubiquinol-cytochrome c oxidoreductase (cytochrome b-c1 complex, complex III, CIII), resulting in different assemblies (supercomplex SCI(1)III(2)IV(1) and megacomplex MCI(2)III(2)IV(2)).</text>
</comment>
<comment type="subcellular location">
    <subcellularLocation>
        <location evidence="1">Mitochondrion inner membrane</location>
        <topology evidence="1">Single-pass membrane protein</topology>
    </subcellularLocation>
</comment>
<comment type="similarity">
    <text evidence="2">Belongs to the cytochrome c oxidase subunit 6c family.</text>
</comment>
<organism>
    <name type="scientific">Plecturocebus donacophilus</name>
    <name type="common">Bolivian gray titi monkey</name>
    <name type="synonym">Callicebus donacophilus</name>
    <dbReference type="NCBI Taxonomy" id="230833"/>
    <lineage>
        <taxon>Eukaryota</taxon>
        <taxon>Metazoa</taxon>
        <taxon>Chordata</taxon>
        <taxon>Craniata</taxon>
        <taxon>Vertebrata</taxon>
        <taxon>Euteleostomi</taxon>
        <taxon>Mammalia</taxon>
        <taxon>Eutheria</taxon>
        <taxon>Euarchontoglires</taxon>
        <taxon>Primates</taxon>
        <taxon>Haplorrhini</taxon>
        <taxon>Platyrrhini</taxon>
        <taxon>Pitheciidae</taxon>
        <taxon>Callicebinae</taxon>
        <taxon>Plecturocebus</taxon>
    </lineage>
</organism>
<proteinExistence type="inferred from homology"/>
<name>COX6C_PLEDO</name>
<sequence>MASEVLVKPQMRGLLARRLRIHMVGAFLVSLGVAALYKFGVAEPRKKAYADFYKNYSAEKDFEEMKKAGLFRSIK</sequence>
<protein>
    <recommendedName>
        <fullName>Cytochrome c oxidase subunit 6C</fullName>
    </recommendedName>
    <alternativeName>
        <fullName>Cytochrome c oxidase polypeptide VIc</fullName>
    </alternativeName>
</protein>
<reference key="1">
    <citation type="submission" date="2003-02" db="EMBL/GenBank/DDBJ databases">
        <title>Co-evolution in cytochrome c oxidase: 9 of 13 subunits show accelerated rates of nonsynonymous substitution in anthropoid primates.</title>
        <authorList>
            <person name="Doan J.W."/>
            <person name="Schmidt T.R."/>
            <person name="Wildman D.E."/>
            <person name="Goldberg A."/>
            <person name="Huttemann M."/>
            <person name="Goodman M."/>
            <person name="Weiss M.L."/>
            <person name="Grossman L.I."/>
        </authorList>
    </citation>
    <scope>NUCLEOTIDE SEQUENCE [MRNA]</scope>
</reference>
<keyword id="KW-0472">Membrane</keyword>
<keyword id="KW-0496">Mitochondrion</keyword>
<keyword id="KW-0999">Mitochondrion inner membrane</keyword>
<keyword id="KW-0812">Transmembrane</keyword>
<keyword id="KW-1133">Transmembrane helix</keyword>
<accession>Q7YRK0</accession>
<evidence type="ECO:0000250" key="1">
    <source>
        <dbReference type="UniProtKB" id="P04038"/>
    </source>
</evidence>
<evidence type="ECO:0000305" key="2"/>
<feature type="chain" id="PRO_0000006129" description="Cytochrome c oxidase subunit 6C">
    <location>
        <begin position="1"/>
        <end position="75"/>
    </location>
</feature>
<feature type="topological domain" description="Mitochondrial matrix" evidence="1">
    <location>
        <begin position="1"/>
        <end position="13"/>
    </location>
</feature>
<feature type="transmembrane region" description="Helical" evidence="1">
    <location>
        <begin position="14"/>
        <end position="54"/>
    </location>
</feature>
<feature type="topological domain" description="Mitochondrial intermembrane" evidence="1">
    <location>
        <begin position="55"/>
        <end position="75"/>
    </location>
</feature>